<reference key="1">
    <citation type="journal article" date="1993" name="J. Mol. Biol.">
        <title>Nucleotide sequence and characterization of Rhizobium meliloti nodulation competitiveness genes nfe.</title>
        <authorList>
            <person name="Soto M.J."/>
            <person name="Zorzano A."/>
            <person name="Mercado-Blanco J."/>
            <person name="Lepek V."/>
            <person name="Olivares J."/>
            <person name="Toro N."/>
        </authorList>
    </citation>
    <scope>NUCLEOTIDE SEQUENCE [GENOMIC DNA]</scope>
    <source>
        <strain>GR4</strain>
    </source>
</reference>
<feature type="chain" id="PRO_0000096787" description="Protein nfe1">
    <location>
        <begin position="1"/>
        <end position="141"/>
    </location>
</feature>
<organism>
    <name type="scientific">Rhizobium meliloti</name>
    <name type="common">Ensifer meliloti</name>
    <name type="synonym">Sinorhizobium meliloti</name>
    <dbReference type="NCBI Taxonomy" id="382"/>
    <lineage>
        <taxon>Bacteria</taxon>
        <taxon>Pseudomonadati</taxon>
        <taxon>Pseudomonadota</taxon>
        <taxon>Alphaproteobacteria</taxon>
        <taxon>Hyphomicrobiales</taxon>
        <taxon>Rhizobiaceae</taxon>
        <taxon>Sinorhizobium/Ensifer group</taxon>
        <taxon>Sinorhizobium</taxon>
    </lineage>
</organism>
<evidence type="ECO:0000305" key="1"/>
<geneLocation type="plasmid">
    <name>pRmeGR4b</name>
</geneLocation>
<keyword id="KW-0536">Nodulation</keyword>
<keyword id="KW-0614">Plasmid</keyword>
<gene>
    <name type="primary">nfe1</name>
</gene>
<proteinExistence type="predicted"/>
<comment type="function">
    <text>Responsible for the nodulation efficiency and competitive ability of strain GR4 on alfalfa roots.</text>
</comment>
<comment type="similarity">
    <text evidence="1">To the N-terminal of nitrogenase iron protein (NifH). Has lost the ATP-binding site.</text>
</comment>
<accession>Q52993</accession>
<dbReference type="EMBL" id="X66124">
    <property type="protein sequence ID" value="CAA46914.1"/>
    <property type="molecule type" value="Genomic_DNA"/>
</dbReference>
<dbReference type="PIR" id="S35088">
    <property type="entry name" value="S35088"/>
</dbReference>
<dbReference type="RefSeq" id="WP_015241663.1">
    <property type="nucleotide sequence ID" value="NZ_RPLX01000153.1"/>
</dbReference>
<protein>
    <recommendedName>
        <fullName>Protein nfe1</fullName>
    </recommendedName>
</protein>
<name>NFE1_RHIML</name>
<sequence length="141" mass="15652">MAALRQVAFYGKGGIGNSKRKPELVTASIEDRSAGSPSKNKMHFQSRMNVAASMRGGDGLPPSVRCRLHLEDGTTRGERKERTRLAATFQSVSEERPRLHMPRRVTTTHTTLFVTFVGFTTPIVPSTVWSISRSNHLKQSN</sequence>